<keyword id="KW-0997">Cell inner membrane</keyword>
<keyword id="KW-1003">Cell membrane</keyword>
<keyword id="KW-0472">Membrane</keyword>
<keyword id="KW-0812">Transmembrane</keyword>
<keyword id="KW-1133">Transmembrane helix</keyword>
<dbReference type="EMBL" id="CU928160">
    <property type="protein sequence ID" value="CAQ98133.1"/>
    <property type="molecule type" value="Genomic_DNA"/>
</dbReference>
<dbReference type="RefSeq" id="WP_000808667.1">
    <property type="nucleotide sequence ID" value="NC_011741.1"/>
</dbReference>
<dbReference type="KEGG" id="ecr:ECIAI1_1274"/>
<dbReference type="HOGENOM" id="CLU_089554_2_0_6"/>
<dbReference type="GO" id="GO:0005886">
    <property type="term" value="C:plasma membrane"/>
    <property type="evidence" value="ECO:0007669"/>
    <property type="project" value="UniProtKB-SubCell"/>
</dbReference>
<dbReference type="HAMAP" id="MF_00189">
    <property type="entry name" value="YciB"/>
    <property type="match status" value="1"/>
</dbReference>
<dbReference type="InterPro" id="IPR006008">
    <property type="entry name" value="YciB"/>
</dbReference>
<dbReference type="NCBIfam" id="TIGR00997">
    <property type="entry name" value="ispZ"/>
    <property type="match status" value="1"/>
</dbReference>
<dbReference type="NCBIfam" id="NF001324">
    <property type="entry name" value="PRK00259.1-2"/>
    <property type="match status" value="1"/>
</dbReference>
<dbReference type="NCBIfam" id="NF001325">
    <property type="entry name" value="PRK00259.1-3"/>
    <property type="match status" value="1"/>
</dbReference>
<dbReference type="NCBIfam" id="NF001326">
    <property type="entry name" value="PRK00259.1-4"/>
    <property type="match status" value="1"/>
</dbReference>
<dbReference type="PANTHER" id="PTHR36917:SF1">
    <property type="entry name" value="INNER MEMBRANE-SPANNING PROTEIN YCIB"/>
    <property type="match status" value="1"/>
</dbReference>
<dbReference type="PANTHER" id="PTHR36917">
    <property type="entry name" value="INTRACELLULAR SEPTATION PROTEIN A-RELATED"/>
    <property type="match status" value="1"/>
</dbReference>
<dbReference type="Pfam" id="PF04279">
    <property type="entry name" value="IspA"/>
    <property type="match status" value="1"/>
</dbReference>
<accession>B7LY10</accession>
<evidence type="ECO:0000255" key="1">
    <source>
        <dbReference type="HAMAP-Rule" id="MF_00189"/>
    </source>
</evidence>
<comment type="function">
    <text evidence="1">Plays a role in cell envelope biogenesis, maintenance of cell envelope integrity and membrane homeostasis.</text>
</comment>
<comment type="subcellular location">
    <subcellularLocation>
        <location evidence="1">Cell inner membrane</location>
        <topology evidence="1">Multi-pass membrane protein</topology>
    </subcellularLocation>
</comment>
<comment type="similarity">
    <text evidence="1">Belongs to the YciB family.</text>
</comment>
<organism>
    <name type="scientific">Escherichia coli O8 (strain IAI1)</name>
    <dbReference type="NCBI Taxonomy" id="585034"/>
    <lineage>
        <taxon>Bacteria</taxon>
        <taxon>Pseudomonadati</taxon>
        <taxon>Pseudomonadota</taxon>
        <taxon>Gammaproteobacteria</taxon>
        <taxon>Enterobacterales</taxon>
        <taxon>Enterobacteriaceae</taxon>
        <taxon>Escherichia</taxon>
    </lineage>
</organism>
<reference key="1">
    <citation type="journal article" date="2009" name="PLoS Genet.">
        <title>Organised genome dynamics in the Escherichia coli species results in highly diverse adaptive paths.</title>
        <authorList>
            <person name="Touchon M."/>
            <person name="Hoede C."/>
            <person name="Tenaillon O."/>
            <person name="Barbe V."/>
            <person name="Baeriswyl S."/>
            <person name="Bidet P."/>
            <person name="Bingen E."/>
            <person name="Bonacorsi S."/>
            <person name="Bouchier C."/>
            <person name="Bouvet O."/>
            <person name="Calteau A."/>
            <person name="Chiapello H."/>
            <person name="Clermont O."/>
            <person name="Cruveiller S."/>
            <person name="Danchin A."/>
            <person name="Diard M."/>
            <person name="Dossat C."/>
            <person name="Karoui M.E."/>
            <person name="Frapy E."/>
            <person name="Garry L."/>
            <person name="Ghigo J.M."/>
            <person name="Gilles A.M."/>
            <person name="Johnson J."/>
            <person name="Le Bouguenec C."/>
            <person name="Lescat M."/>
            <person name="Mangenot S."/>
            <person name="Martinez-Jehanne V."/>
            <person name="Matic I."/>
            <person name="Nassif X."/>
            <person name="Oztas S."/>
            <person name="Petit M.A."/>
            <person name="Pichon C."/>
            <person name="Rouy Z."/>
            <person name="Ruf C.S."/>
            <person name="Schneider D."/>
            <person name="Tourret J."/>
            <person name="Vacherie B."/>
            <person name="Vallenet D."/>
            <person name="Medigue C."/>
            <person name="Rocha E.P.C."/>
            <person name="Denamur E."/>
        </authorList>
    </citation>
    <scope>NUCLEOTIDE SEQUENCE [LARGE SCALE GENOMIC DNA]</scope>
    <source>
        <strain>IAI1</strain>
    </source>
</reference>
<sequence>MKQFLDFLPLVVFFAFYKIYDIYAATAALIVATAIVLIYSWVRFRKVEKMALITFVLVVVFGGLTLFFHNDEFIKWKVTVIYALFAGALLVSQWVMKKPLIQRMLGKELTLPQPVWSKLNLAWAVFFILCGLANIYIAFWLPQNIWVNFKVFGLTALTLIFTLLSGIYIYRHMPQEDKS</sequence>
<gene>
    <name evidence="1" type="primary">yciB</name>
    <name type="ordered locus">ECIAI1_1274</name>
</gene>
<protein>
    <recommendedName>
        <fullName evidence="1">Inner membrane-spanning protein YciB</fullName>
    </recommendedName>
</protein>
<feature type="chain" id="PRO_1000118580" description="Inner membrane-spanning protein YciB">
    <location>
        <begin position="1"/>
        <end position="179"/>
    </location>
</feature>
<feature type="transmembrane region" description="Helical" evidence="1">
    <location>
        <begin position="22"/>
        <end position="42"/>
    </location>
</feature>
<feature type="transmembrane region" description="Helical" evidence="1">
    <location>
        <begin position="50"/>
        <end position="70"/>
    </location>
</feature>
<feature type="transmembrane region" description="Helical" evidence="1">
    <location>
        <begin position="76"/>
        <end position="96"/>
    </location>
</feature>
<feature type="transmembrane region" description="Helical" evidence="1">
    <location>
        <begin position="121"/>
        <end position="141"/>
    </location>
</feature>
<feature type="transmembrane region" description="Helical" evidence="1">
    <location>
        <begin position="149"/>
        <end position="169"/>
    </location>
</feature>
<proteinExistence type="inferred from homology"/>
<name>YCIB_ECO8A</name>